<accession>P0A7G8</accession>
<accession>P03017</accession>
<accession>P26347</accession>
<accession>P78213</accession>
<dbReference type="EMBL" id="AE005174">
    <property type="protein sequence ID" value="AAG57804.1"/>
    <property type="molecule type" value="Genomic_DNA"/>
</dbReference>
<dbReference type="EMBL" id="BA000007">
    <property type="protein sequence ID" value="BAB36979.1"/>
    <property type="molecule type" value="Genomic_DNA"/>
</dbReference>
<dbReference type="PIR" id="D91073">
    <property type="entry name" value="D91073"/>
</dbReference>
<dbReference type="RefSeq" id="NP_311583.1">
    <property type="nucleotide sequence ID" value="NC_002695.1"/>
</dbReference>
<dbReference type="RefSeq" id="WP_000963143.1">
    <property type="nucleotide sequence ID" value="NZ_VOAI01000003.1"/>
</dbReference>
<dbReference type="SMR" id="P0A7G8"/>
<dbReference type="STRING" id="155864.Z4002"/>
<dbReference type="GeneID" id="914722"/>
<dbReference type="GeneID" id="93779312"/>
<dbReference type="KEGG" id="ece:Z4002"/>
<dbReference type="KEGG" id="ecs:ECs_3556"/>
<dbReference type="PATRIC" id="fig|386585.9.peg.3714"/>
<dbReference type="eggNOG" id="COG0468">
    <property type="taxonomic scope" value="Bacteria"/>
</dbReference>
<dbReference type="HOGENOM" id="CLU_040469_3_2_6"/>
<dbReference type="OMA" id="DSKMGLH"/>
<dbReference type="Proteomes" id="UP000000558">
    <property type="component" value="Chromosome"/>
</dbReference>
<dbReference type="Proteomes" id="UP000002519">
    <property type="component" value="Chromosome"/>
</dbReference>
<dbReference type="GO" id="GO:0005829">
    <property type="term" value="C:cytosol"/>
    <property type="evidence" value="ECO:0007669"/>
    <property type="project" value="TreeGrafter"/>
</dbReference>
<dbReference type="GO" id="GO:0005524">
    <property type="term" value="F:ATP binding"/>
    <property type="evidence" value="ECO:0007669"/>
    <property type="project" value="UniProtKB-UniRule"/>
</dbReference>
<dbReference type="GO" id="GO:0016887">
    <property type="term" value="F:ATP hydrolysis activity"/>
    <property type="evidence" value="ECO:0007669"/>
    <property type="project" value="InterPro"/>
</dbReference>
<dbReference type="GO" id="GO:0140664">
    <property type="term" value="F:ATP-dependent DNA damage sensor activity"/>
    <property type="evidence" value="ECO:0007669"/>
    <property type="project" value="InterPro"/>
</dbReference>
<dbReference type="GO" id="GO:0003684">
    <property type="term" value="F:damaged DNA binding"/>
    <property type="evidence" value="ECO:0007669"/>
    <property type="project" value="UniProtKB-UniRule"/>
</dbReference>
<dbReference type="GO" id="GO:0003697">
    <property type="term" value="F:single-stranded DNA binding"/>
    <property type="evidence" value="ECO:0007669"/>
    <property type="project" value="UniProtKB-UniRule"/>
</dbReference>
<dbReference type="GO" id="GO:0006310">
    <property type="term" value="P:DNA recombination"/>
    <property type="evidence" value="ECO:0007669"/>
    <property type="project" value="UniProtKB-UniRule"/>
</dbReference>
<dbReference type="GO" id="GO:0006281">
    <property type="term" value="P:DNA repair"/>
    <property type="evidence" value="ECO:0007669"/>
    <property type="project" value="UniProtKB-UniRule"/>
</dbReference>
<dbReference type="GO" id="GO:0009432">
    <property type="term" value="P:SOS response"/>
    <property type="evidence" value="ECO:0007669"/>
    <property type="project" value="UniProtKB-UniRule"/>
</dbReference>
<dbReference type="CDD" id="cd00983">
    <property type="entry name" value="RecA"/>
    <property type="match status" value="1"/>
</dbReference>
<dbReference type="FunFam" id="3.40.50.300:FF:000087">
    <property type="entry name" value="Recombinase RecA"/>
    <property type="match status" value="1"/>
</dbReference>
<dbReference type="Gene3D" id="3.40.50.300">
    <property type="entry name" value="P-loop containing nucleotide triphosphate hydrolases"/>
    <property type="match status" value="1"/>
</dbReference>
<dbReference type="HAMAP" id="MF_00268">
    <property type="entry name" value="RecA"/>
    <property type="match status" value="1"/>
</dbReference>
<dbReference type="InterPro" id="IPR003593">
    <property type="entry name" value="AAA+_ATPase"/>
</dbReference>
<dbReference type="InterPro" id="IPR013765">
    <property type="entry name" value="DNA_recomb/repair_RecA"/>
</dbReference>
<dbReference type="InterPro" id="IPR020584">
    <property type="entry name" value="DNA_recomb/repair_RecA_CS"/>
</dbReference>
<dbReference type="InterPro" id="IPR027417">
    <property type="entry name" value="P-loop_NTPase"/>
</dbReference>
<dbReference type="InterPro" id="IPR049261">
    <property type="entry name" value="RecA-like_C"/>
</dbReference>
<dbReference type="InterPro" id="IPR049428">
    <property type="entry name" value="RecA-like_N"/>
</dbReference>
<dbReference type="InterPro" id="IPR020588">
    <property type="entry name" value="RecA_ATP-bd"/>
</dbReference>
<dbReference type="InterPro" id="IPR023400">
    <property type="entry name" value="RecA_C_sf"/>
</dbReference>
<dbReference type="InterPro" id="IPR020587">
    <property type="entry name" value="RecA_monomer-monomer_interface"/>
</dbReference>
<dbReference type="NCBIfam" id="TIGR02012">
    <property type="entry name" value="tigrfam_recA"/>
    <property type="match status" value="1"/>
</dbReference>
<dbReference type="PANTHER" id="PTHR45900:SF1">
    <property type="entry name" value="MITOCHONDRIAL DNA REPAIR PROTEIN RECA HOMOLOG-RELATED"/>
    <property type="match status" value="1"/>
</dbReference>
<dbReference type="PANTHER" id="PTHR45900">
    <property type="entry name" value="RECA"/>
    <property type="match status" value="1"/>
</dbReference>
<dbReference type="Pfam" id="PF00154">
    <property type="entry name" value="RecA"/>
    <property type="match status" value="1"/>
</dbReference>
<dbReference type="Pfam" id="PF21096">
    <property type="entry name" value="RecA_C"/>
    <property type="match status" value="1"/>
</dbReference>
<dbReference type="PRINTS" id="PR00142">
    <property type="entry name" value="RECA"/>
</dbReference>
<dbReference type="SMART" id="SM00382">
    <property type="entry name" value="AAA"/>
    <property type="match status" value="1"/>
</dbReference>
<dbReference type="SUPFAM" id="SSF52540">
    <property type="entry name" value="P-loop containing nucleoside triphosphate hydrolases"/>
    <property type="match status" value="1"/>
</dbReference>
<dbReference type="SUPFAM" id="SSF54752">
    <property type="entry name" value="RecA protein, C-terminal domain"/>
    <property type="match status" value="1"/>
</dbReference>
<dbReference type="PROSITE" id="PS00321">
    <property type="entry name" value="RECA_1"/>
    <property type="match status" value="1"/>
</dbReference>
<dbReference type="PROSITE" id="PS50162">
    <property type="entry name" value="RECA_2"/>
    <property type="match status" value="1"/>
</dbReference>
<dbReference type="PROSITE" id="PS50163">
    <property type="entry name" value="RECA_3"/>
    <property type="match status" value="1"/>
</dbReference>
<evidence type="ECO:0000250" key="1"/>
<evidence type="ECO:0000255" key="2">
    <source>
        <dbReference type="HAMAP-Rule" id="MF_00268"/>
    </source>
</evidence>
<evidence type="ECO:0000256" key="3">
    <source>
        <dbReference type="SAM" id="MobiDB-lite"/>
    </source>
</evidence>
<evidence type="ECO:0000305" key="4"/>
<organism>
    <name type="scientific">Escherichia coli O157:H7</name>
    <dbReference type="NCBI Taxonomy" id="83334"/>
    <lineage>
        <taxon>Bacteria</taxon>
        <taxon>Pseudomonadati</taxon>
        <taxon>Pseudomonadota</taxon>
        <taxon>Gammaproteobacteria</taxon>
        <taxon>Enterobacterales</taxon>
        <taxon>Enterobacteriaceae</taxon>
        <taxon>Escherichia</taxon>
    </lineage>
</organism>
<gene>
    <name evidence="2" type="primary">recA</name>
    <name type="ordered locus">Z4002</name>
    <name type="ordered locus">ECs3556</name>
</gene>
<proteinExistence type="inferred from homology"/>
<feature type="initiator methionine" description="Removed" evidence="1">
    <location>
        <position position="1"/>
    </location>
</feature>
<feature type="chain" id="PRO_0000122704" description="Protein RecA">
    <location>
        <begin position="2"/>
        <end position="353"/>
    </location>
</feature>
<feature type="region of interest" description="Disordered" evidence="3">
    <location>
        <begin position="330"/>
        <end position="353"/>
    </location>
</feature>
<feature type="compositionally biased region" description="Acidic residues" evidence="3">
    <location>
        <begin position="339"/>
        <end position="353"/>
    </location>
</feature>
<feature type="binding site" evidence="2">
    <location>
        <begin position="67"/>
        <end position="74"/>
    </location>
    <ligand>
        <name>ATP</name>
        <dbReference type="ChEBI" id="CHEBI:30616"/>
    </ligand>
</feature>
<feature type="sequence conflict" description="In Ref. 1; AAG57804." evidence="4" ref="1">
    <original>D</original>
    <variation>N</variation>
    <location>
        <position position="140"/>
    </location>
</feature>
<protein>
    <recommendedName>
        <fullName evidence="2">Protein RecA</fullName>
    </recommendedName>
    <alternativeName>
        <fullName evidence="2">Recombinase A</fullName>
    </alternativeName>
</protein>
<comment type="function">
    <text evidence="2">Can catalyze the hydrolysis of ATP in the presence of single-stranded DNA, the ATP-dependent uptake of single-stranded DNA by duplex DNA, and the ATP-dependent hybridization of homologous single-stranded DNAs. It interacts with LexA causing its activation and leading to its autocatalytic cleavage.</text>
</comment>
<comment type="subcellular location">
    <subcellularLocation>
        <location evidence="2">Cytoplasm</location>
    </subcellularLocation>
</comment>
<comment type="similarity">
    <text evidence="2">Belongs to the RecA family.</text>
</comment>
<keyword id="KW-0067">ATP-binding</keyword>
<keyword id="KW-0963">Cytoplasm</keyword>
<keyword id="KW-0227">DNA damage</keyword>
<keyword id="KW-0233">DNA recombination</keyword>
<keyword id="KW-0234">DNA repair</keyword>
<keyword id="KW-0238">DNA-binding</keyword>
<keyword id="KW-0547">Nucleotide-binding</keyword>
<keyword id="KW-1185">Reference proteome</keyword>
<keyword id="KW-0742">SOS response</keyword>
<name>RECA_ECO57</name>
<reference key="1">
    <citation type="journal article" date="2001" name="Nature">
        <title>Genome sequence of enterohaemorrhagic Escherichia coli O157:H7.</title>
        <authorList>
            <person name="Perna N.T."/>
            <person name="Plunkett G. III"/>
            <person name="Burland V."/>
            <person name="Mau B."/>
            <person name="Glasner J.D."/>
            <person name="Rose D.J."/>
            <person name="Mayhew G.F."/>
            <person name="Evans P.S."/>
            <person name="Gregor J."/>
            <person name="Kirkpatrick H.A."/>
            <person name="Posfai G."/>
            <person name="Hackett J."/>
            <person name="Klink S."/>
            <person name="Boutin A."/>
            <person name="Shao Y."/>
            <person name="Miller L."/>
            <person name="Grotbeck E.J."/>
            <person name="Davis N.W."/>
            <person name="Lim A."/>
            <person name="Dimalanta E.T."/>
            <person name="Potamousis K."/>
            <person name="Apodaca J."/>
            <person name="Anantharaman T.S."/>
            <person name="Lin J."/>
            <person name="Yen G."/>
            <person name="Schwartz D.C."/>
            <person name="Welch R.A."/>
            <person name="Blattner F.R."/>
        </authorList>
    </citation>
    <scope>NUCLEOTIDE SEQUENCE [LARGE SCALE GENOMIC DNA]</scope>
    <source>
        <strain>O157:H7 / EDL933 / ATCC 700927 / EHEC</strain>
    </source>
</reference>
<reference key="2">
    <citation type="journal article" date="2001" name="DNA Res.">
        <title>Complete genome sequence of enterohemorrhagic Escherichia coli O157:H7 and genomic comparison with a laboratory strain K-12.</title>
        <authorList>
            <person name="Hayashi T."/>
            <person name="Makino K."/>
            <person name="Ohnishi M."/>
            <person name="Kurokawa K."/>
            <person name="Ishii K."/>
            <person name="Yokoyama K."/>
            <person name="Han C.-G."/>
            <person name="Ohtsubo E."/>
            <person name="Nakayama K."/>
            <person name="Murata T."/>
            <person name="Tanaka M."/>
            <person name="Tobe T."/>
            <person name="Iida T."/>
            <person name="Takami H."/>
            <person name="Honda T."/>
            <person name="Sasakawa C."/>
            <person name="Ogasawara N."/>
            <person name="Yasunaga T."/>
            <person name="Kuhara S."/>
            <person name="Shiba T."/>
            <person name="Hattori M."/>
            <person name="Shinagawa H."/>
        </authorList>
    </citation>
    <scope>NUCLEOTIDE SEQUENCE [LARGE SCALE GENOMIC DNA]</scope>
    <source>
        <strain>O157:H7 / Sakai / RIMD 0509952 / EHEC</strain>
    </source>
</reference>
<sequence length="353" mass="37973">MAIDENKQKALAAALGQIEKQFGKGSIMRLGEDRSMDVETISTGSLSLDIALGAGGLPMGRIVEIYGPESSGKTTLTLQVIAAAQREGKTCAFIDAEHALDPIYARKLGVDIDNLLCSQPDTGEQALEICDALARSGAVDVIVVDSVAALTPKAEIEGEIGDSHMGLAARMMSQAMRKLAGNLKQSNTLLIFINQIRMKIGVMFGNPETTTGGNALKFYASVRLDIRRIGAVKEGENVVGSETRVKVVKNKIAAPFKQAEFQILYGEGINFYGELVDLGVKEKLIEKAGAWYSYKGEKIGQGKANATAWLKDNPETAKEIEKKVRELLLSNPNSTPDFSVDDSEGVAETNEDF</sequence>